<dbReference type="EMBL" id="AL844502">
    <property type="protein sequence ID" value="CAB39001.2"/>
    <property type="molecule type" value="Genomic_DNA"/>
</dbReference>
<dbReference type="RefSeq" id="XP_001351126.1">
    <property type="nucleotide sequence ID" value="XM_001351090.1"/>
</dbReference>
<dbReference type="SMR" id="O97235"/>
<dbReference type="FunCoup" id="O97235">
    <property type="interactions" value="260"/>
</dbReference>
<dbReference type="STRING" id="36329.O97235"/>
<dbReference type="PaxDb" id="5833-PFC0225c"/>
<dbReference type="EnsemblProtists" id="CAB39001">
    <property type="protein sequence ID" value="CAB39001"/>
    <property type="gene ID" value="PF3D7_0305000"/>
</dbReference>
<dbReference type="KEGG" id="pfa:PF3D7_0305000"/>
<dbReference type="VEuPathDB" id="PlasmoDB:PF3D7_0305000"/>
<dbReference type="HOGENOM" id="CLU_047155_2_0_1"/>
<dbReference type="InParanoid" id="O97235"/>
<dbReference type="OMA" id="QEYMLDD"/>
<dbReference type="OrthoDB" id="277235at2759"/>
<dbReference type="PhylomeDB" id="O97235"/>
<dbReference type="Proteomes" id="UP000001450">
    <property type="component" value="Chromosome 3"/>
</dbReference>
<dbReference type="GO" id="GO:0020011">
    <property type="term" value="C:apicoplast"/>
    <property type="evidence" value="ECO:0000314"/>
    <property type="project" value="GeneDB"/>
</dbReference>
<dbReference type="GO" id="GO:0005739">
    <property type="term" value="C:mitochondrion"/>
    <property type="evidence" value="ECO:0007669"/>
    <property type="project" value="UniProtKB-SubCell"/>
</dbReference>
<dbReference type="GO" id="GO:0003746">
    <property type="term" value="F:translation elongation factor activity"/>
    <property type="evidence" value="ECO:0000250"/>
    <property type="project" value="GeneDB"/>
</dbReference>
<dbReference type="GO" id="GO:0070125">
    <property type="term" value="P:mitochondrial translational elongation"/>
    <property type="evidence" value="ECO:0000318"/>
    <property type="project" value="GO_Central"/>
</dbReference>
<dbReference type="GO" id="GO:0006414">
    <property type="term" value="P:translational elongation"/>
    <property type="evidence" value="ECO:0000250"/>
    <property type="project" value="GeneDB"/>
</dbReference>
<dbReference type="CDD" id="cd14275">
    <property type="entry name" value="UBA_EF-Ts"/>
    <property type="match status" value="1"/>
</dbReference>
<dbReference type="Gene3D" id="1.10.286.20">
    <property type="match status" value="1"/>
</dbReference>
<dbReference type="Gene3D" id="1.10.8.10">
    <property type="entry name" value="DNA helicase RuvA subunit, C-terminal domain"/>
    <property type="match status" value="1"/>
</dbReference>
<dbReference type="Gene3D" id="3.30.479.20">
    <property type="entry name" value="Elongation factor Ts, dimerisation domain"/>
    <property type="match status" value="2"/>
</dbReference>
<dbReference type="HAMAP" id="MF_00050">
    <property type="entry name" value="EF_Ts"/>
    <property type="match status" value="1"/>
</dbReference>
<dbReference type="InterPro" id="IPR036402">
    <property type="entry name" value="EF-Ts_dimer_sf"/>
</dbReference>
<dbReference type="InterPro" id="IPR001816">
    <property type="entry name" value="Transl_elong_EFTs/EF1B"/>
</dbReference>
<dbReference type="InterPro" id="IPR014039">
    <property type="entry name" value="Transl_elong_EFTs/EF1B_dimer"/>
</dbReference>
<dbReference type="InterPro" id="IPR009060">
    <property type="entry name" value="UBA-like_sf"/>
</dbReference>
<dbReference type="PANTHER" id="PTHR11741">
    <property type="entry name" value="ELONGATION FACTOR TS"/>
    <property type="match status" value="1"/>
</dbReference>
<dbReference type="PANTHER" id="PTHR11741:SF0">
    <property type="entry name" value="ELONGATION FACTOR TS, MITOCHONDRIAL"/>
    <property type="match status" value="1"/>
</dbReference>
<dbReference type="Pfam" id="PF00889">
    <property type="entry name" value="EF_TS"/>
    <property type="match status" value="1"/>
</dbReference>
<dbReference type="SUPFAM" id="SSF54713">
    <property type="entry name" value="Elongation factor Ts (EF-Ts), dimerisation domain"/>
    <property type="match status" value="1"/>
</dbReference>
<dbReference type="SUPFAM" id="SSF46934">
    <property type="entry name" value="UBA-like"/>
    <property type="match status" value="1"/>
</dbReference>
<evidence type="ECO:0000255" key="1">
    <source>
        <dbReference type="HAMAP-Rule" id="MF_03135"/>
    </source>
</evidence>
<feature type="chain" id="PRO_0000402334" description="Elongation factor Ts, mitochondrial">
    <location>
        <begin position="1"/>
        <end position="390"/>
    </location>
</feature>
<protein>
    <recommendedName>
        <fullName evidence="1">Elongation factor Ts, mitochondrial</fullName>
        <shortName evidence="1">EF-Ts</shortName>
        <shortName evidence="1">EF-TsMt</shortName>
    </recommendedName>
</protein>
<comment type="function">
    <text evidence="1">Associates with the EF-Tu.GDP complex and induces the exchange of GDP to GTP. It remains bound to the aminoacyl-tRNA.EF-Tu.GTP complex up to the GTP hydrolysis stage on the ribosome.</text>
</comment>
<comment type="subcellular location">
    <subcellularLocation>
        <location evidence="1">Mitochondrion</location>
    </subcellularLocation>
</comment>
<comment type="miscellaneous">
    <text evidence="1">This protein may be expected to contain an N-terminal transit peptide but none has been predicted.</text>
</comment>
<comment type="similarity">
    <text evidence="1">Belongs to the EF-Ts family.</text>
</comment>
<keyword id="KW-0251">Elongation factor</keyword>
<keyword id="KW-0496">Mitochondrion</keyword>
<keyword id="KW-0648">Protein biosynthesis</keyword>
<keyword id="KW-1185">Reference proteome</keyword>
<proteinExistence type="inferred from homology"/>
<gene>
    <name type="ORF">PFC0225c</name>
</gene>
<sequence>MKLFYFFLLSFLSSYIIAFSFKSTQSAHFILSVGRCNENYGNNIKKNRLYSTNNDHLKLLKYVREVTNASIQLCNKALKECNNDVDKAIEHVRKNTKSSTFVSTNIKVKKEGLVASQIKDDKIVLLELLTDSDFVARNKMFVQFVYSLLNVTLDNDLSVGNCKNAGDNKNSEDGYTTSGNILSNNNIMDEILSLPYVDEENKSNSTMREQLNYLRNIFREDIKIGRFSKYSKKNPNEFLHYYIHNKLDDHVGLSGVLLVLHINNLDEILKTKKEDIVNFANDLSMHIISAKPASVSIDTLNPKITKKEMDIIRDGLKDMKKPENILNNMIQGKMKKFYSSIVFLEQEYMLDETKRKVSQVIKDFGKDHNINISVNHFNYFAIGEKNVLME</sequence>
<name>EFTS_PLAF7</name>
<reference key="1">
    <citation type="journal article" date="1999" name="Nature">
        <title>The complete nucleotide sequence of chromosome 3 of Plasmodium falciparum.</title>
        <authorList>
            <person name="Bowman S."/>
            <person name="Lawson D."/>
            <person name="Basham D."/>
            <person name="Brown D."/>
            <person name="Chillingworth T."/>
            <person name="Churcher C.M."/>
            <person name="Craig A."/>
            <person name="Davies R.M."/>
            <person name="Devlin K."/>
            <person name="Feltwell T."/>
            <person name="Gentles S."/>
            <person name="Gwilliam R."/>
            <person name="Hamlin N."/>
            <person name="Harris D."/>
            <person name="Holroyd S."/>
            <person name="Hornsby T."/>
            <person name="Horrocks P."/>
            <person name="Jagels K."/>
            <person name="Jassal B."/>
            <person name="Kyes S."/>
            <person name="McLean J."/>
            <person name="Moule S."/>
            <person name="Mungall K.L."/>
            <person name="Murphy L."/>
            <person name="Oliver K."/>
            <person name="Quail M.A."/>
            <person name="Rajandream M.A."/>
            <person name="Rutter S."/>
            <person name="Skelton J."/>
            <person name="Squares R."/>
            <person name="Squares S."/>
            <person name="Sulston J.E."/>
            <person name="Whitehead S."/>
            <person name="Woodward J.R."/>
            <person name="Newbold C."/>
            <person name="Barrell B.G."/>
        </authorList>
    </citation>
    <scope>NUCLEOTIDE SEQUENCE [LARGE SCALE GENOMIC DNA]</scope>
    <source>
        <strain>3D7</strain>
    </source>
</reference>
<reference key="2">
    <citation type="journal article" date="2002" name="Nature">
        <title>Genome sequence of the human malaria parasite Plasmodium falciparum.</title>
        <authorList>
            <person name="Gardner M.J."/>
            <person name="Hall N."/>
            <person name="Fung E."/>
            <person name="White O."/>
            <person name="Berriman M."/>
            <person name="Hyman R.W."/>
            <person name="Carlton J.M."/>
            <person name="Pain A."/>
            <person name="Nelson K.E."/>
            <person name="Bowman S."/>
            <person name="Paulsen I.T."/>
            <person name="James K.D."/>
            <person name="Eisen J.A."/>
            <person name="Rutherford K.M."/>
            <person name="Salzberg S.L."/>
            <person name="Craig A."/>
            <person name="Kyes S."/>
            <person name="Chan M.-S."/>
            <person name="Nene V."/>
            <person name="Shallom S.J."/>
            <person name="Suh B."/>
            <person name="Peterson J."/>
            <person name="Angiuoli S."/>
            <person name="Pertea M."/>
            <person name="Allen J."/>
            <person name="Selengut J."/>
            <person name="Haft D."/>
            <person name="Mather M.W."/>
            <person name="Vaidya A.B."/>
            <person name="Martin D.M.A."/>
            <person name="Fairlamb A.H."/>
            <person name="Fraunholz M.J."/>
            <person name="Roos D.S."/>
            <person name="Ralph S.A."/>
            <person name="McFadden G.I."/>
            <person name="Cummings L.M."/>
            <person name="Subramanian G.M."/>
            <person name="Mungall C."/>
            <person name="Venter J.C."/>
            <person name="Carucci D.J."/>
            <person name="Hoffman S.L."/>
            <person name="Newbold C."/>
            <person name="Davis R.W."/>
            <person name="Fraser C.M."/>
            <person name="Barrell B.G."/>
        </authorList>
    </citation>
    <scope>NUCLEOTIDE SEQUENCE [LARGE SCALE GENOMIC DNA]</scope>
    <source>
        <strain>3D7</strain>
    </source>
</reference>
<reference key="3">
    <citation type="journal article" date="2002" name="Nature">
        <title>Sequence of Plasmodium falciparum chromosomes 1, 3-9 and 13.</title>
        <authorList>
            <person name="Hall N."/>
            <person name="Pain A."/>
            <person name="Berriman M."/>
            <person name="Churcher C.M."/>
            <person name="Harris B."/>
            <person name="Harris D."/>
            <person name="Mungall K.L."/>
            <person name="Bowman S."/>
            <person name="Atkin R."/>
            <person name="Baker S."/>
            <person name="Barron A."/>
            <person name="Brooks K."/>
            <person name="Buckee C.O."/>
            <person name="Burrows C."/>
            <person name="Cherevach I."/>
            <person name="Chillingworth C."/>
            <person name="Chillingworth T."/>
            <person name="Christodoulou Z."/>
            <person name="Clark L."/>
            <person name="Clark R."/>
            <person name="Corton C."/>
            <person name="Cronin A."/>
            <person name="Davies R.M."/>
            <person name="Davis P."/>
            <person name="Dear P."/>
            <person name="Dearden F."/>
            <person name="Doggett J."/>
            <person name="Feltwell T."/>
            <person name="Goble A."/>
            <person name="Goodhead I."/>
            <person name="Gwilliam R."/>
            <person name="Hamlin N."/>
            <person name="Hance Z."/>
            <person name="Harper D."/>
            <person name="Hauser H."/>
            <person name="Hornsby T."/>
            <person name="Holroyd S."/>
            <person name="Horrocks P."/>
            <person name="Humphray S."/>
            <person name="Jagels K."/>
            <person name="James K.D."/>
            <person name="Johnson D."/>
            <person name="Kerhornou A."/>
            <person name="Knights A."/>
            <person name="Konfortov B."/>
            <person name="Kyes S."/>
            <person name="Larke N."/>
            <person name="Lawson D."/>
            <person name="Lennard N."/>
            <person name="Line A."/>
            <person name="Maddison M."/>
            <person name="Mclean J."/>
            <person name="Mooney P."/>
            <person name="Moule S."/>
            <person name="Murphy L."/>
            <person name="Oliver K."/>
            <person name="Ormond D."/>
            <person name="Price C."/>
            <person name="Quail M.A."/>
            <person name="Rabbinowitsch E."/>
            <person name="Rajandream M.A."/>
            <person name="Rutter S."/>
            <person name="Rutherford K.M."/>
            <person name="Sanders M."/>
            <person name="Simmonds M."/>
            <person name="Seeger K."/>
            <person name="Sharp S."/>
            <person name="Smith R."/>
            <person name="Squares R."/>
            <person name="Squares S."/>
            <person name="Stevens K."/>
            <person name="Taylor K."/>
            <person name="Tivey A."/>
            <person name="Unwin L."/>
            <person name="Whitehead S."/>
            <person name="Woodward J.R."/>
            <person name="Sulston J.E."/>
            <person name="Craig A."/>
            <person name="Newbold C."/>
            <person name="Barrell B.G."/>
        </authorList>
    </citation>
    <scope>NUCLEOTIDE SEQUENCE [LARGE SCALE GENOMIC DNA]</scope>
    <source>
        <strain>3D7</strain>
    </source>
</reference>
<accession>O97235</accession>
<organism>
    <name type="scientific">Plasmodium falciparum (isolate 3D7)</name>
    <dbReference type="NCBI Taxonomy" id="36329"/>
    <lineage>
        <taxon>Eukaryota</taxon>
        <taxon>Sar</taxon>
        <taxon>Alveolata</taxon>
        <taxon>Apicomplexa</taxon>
        <taxon>Aconoidasida</taxon>
        <taxon>Haemosporida</taxon>
        <taxon>Plasmodiidae</taxon>
        <taxon>Plasmodium</taxon>
        <taxon>Plasmodium (Laverania)</taxon>
    </lineage>
</organism>